<evidence type="ECO:0000255" key="1">
    <source>
        <dbReference type="HAMAP-Rule" id="MF_00169"/>
    </source>
</evidence>
<organism>
    <name type="scientific">Pectobacterium atrosepticum (strain SCRI 1043 / ATCC BAA-672)</name>
    <name type="common">Erwinia carotovora subsp. atroseptica</name>
    <dbReference type="NCBI Taxonomy" id="218491"/>
    <lineage>
        <taxon>Bacteria</taxon>
        <taxon>Pseudomonadati</taxon>
        <taxon>Pseudomonadota</taxon>
        <taxon>Gammaproteobacteria</taxon>
        <taxon>Enterobacterales</taxon>
        <taxon>Pectobacteriaceae</taxon>
        <taxon>Pectobacterium</taxon>
    </lineage>
</organism>
<keyword id="KW-0028">Amino-acid biosynthesis</keyword>
<keyword id="KW-0057">Aromatic amino acid biosynthesis</keyword>
<keyword id="KW-0456">Lyase</keyword>
<keyword id="KW-1185">Reference proteome</keyword>
<dbReference type="EC" id="4.2.1.10" evidence="1"/>
<dbReference type="EMBL" id="BX950851">
    <property type="protein sequence ID" value="CAG73182.1"/>
    <property type="molecule type" value="Genomic_DNA"/>
</dbReference>
<dbReference type="RefSeq" id="WP_011091897.1">
    <property type="nucleotide sequence ID" value="NC_004547.2"/>
</dbReference>
<dbReference type="SMR" id="Q6DAJ1"/>
<dbReference type="STRING" id="218491.ECA0262"/>
<dbReference type="GeneID" id="57207135"/>
<dbReference type="KEGG" id="eca:ECA0262"/>
<dbReference type="PATRIC" id="fig|218491.5.peg.264"/>
<dbReference type="eggNOG" id="COG0757">
    <property type="taxonomic scope" value="Bacteria"/>
</dbReference>
<dbReference type="HOGENOM" id="CLU_090968_1_0_6"/>
<dbReference type="OrthoDB" id="9790793at2"/>
<dbReference type="UniPathway" id="UPA00053">
    <property type="reaction ID" value="UER00086"/>
</dbReference>
<dbReference type="Proteomes" id="UP000007966">
    <property type="component" value="Chromosome"/>
</dbReference>
<dbReference type="GO" id="GO:0003855">
    <property type="term" value="F:3-dehydroquinate dehydratase activity"/>
    <property type="evidence" value="ECO:0007669"/>
    <property type="project" value="UniProtKB-UniRule"/>
</dbReference>
<dbReference type="GO" id="GO:0008652">
    <property type="term" value="P:amino acid biosynthetic process"/>
    <property type="evidence" value="ECO:0007669"/>
    <property type="project" value="UniProtKB-KW"/>
</dbReference>
<dbReference type="GO" id="GO:0009073">
    <property type="term" value="P:aromatic amino acid family biosynthetic process"/>
    <property type="evidence" value="ECO:0007669"/>
    <property type="project" value="UniProtKB-KW"/>
</dbReference>
<dbReference type="GO" id="GO:0009423">
    <property type="term" value="P:chorismate biosynthetic process"/>
    <property type="evidence" value="ECO:0007669"/>
    <property type="project" value="UniProtKB-UniRule"/>
</dbReference>
<dbReference type="GO" id="GO:0019631">
    <property type="term" value="P:quinate catabolic process"/>
    <property type="evidence" value="ECO:0007669"/>
    <property type="project" value="TreeGrafter"/>
</dbReference>
<dbReference type="CDD" id="cd00466">
    <property type="entry name" value="DHQase_II"/>
    <property type="match status" value="1"/>
</dbReference>
<dbReference type="Gene3D" id="3.40.50.9100">
    <property type="entry name" value="Dehydroquinase, class II"/>
    <property type="match status" value="1"/>
</dbReference>
<dbReference type="HAMAP" id="MF_00169">
    <property type="entry name" value="AroQ"/>
    <property type="match status" value="1"/>
</dbReference>
<dbReference type="InterPro" id="IPR001874">
    <property type="entry name" value="DHquinase_II"/>
</dbReference>
<dbReference type="InterPro" id="IPR018509">
    <property type="entry name" value="DHquinase_II_CS"/>
</dbReference>
<dbReference type="InterPro" id="IPR036441">
    <property type="entry name" value="DHquinase_II_sf"/>
</dbReference>
<dbReference type="NCBIfam" id="TIGR01088">
    <property type="entry name" value="aroQ"/>
    <property type="match status" value="1"/>
</dbReference>
<dbReference type="NCBIfam" id="NF003804">
    <property type="entry name" value="PRK05395.1-1"/>
    <property type="match status" value="1"/>
</dbReference>
<dbReference type="NCBIfam" id="NF003805">
    <property type="entry name" value="PRK05395.1-2"/>
    <property type="match status" value="1"/>
</dbReference>
<dbReference type="NCBIfam" id="NF003806">
    <property type="entry name" value="PRK05395.1-3"/>
    <property type="match status" value="1"/>
</dbReference>
<dbReference type="NCBIfam" id="NF003807">
    <property type="entry name" value="PRK05395.1-4"/>
    <property type="match status" value="1"/>
</dbReference>
<dbReference type="PANTHER" id="PTHR21272">
    <property type="entry name" value="CATABOLIC 3-DEHYDROQUINASE"/>
    <property type="match status" value="1"/>
</dbReference>
<dbReference type="PANTHER" id="PTHR21272:SF3">
    <property type="entry name" value="CATABOLIC 3-DEHYDROQUINASE"/>
    <property type="match status" value="1"/>
</dbReference>
<dbReference type="Pfam" id="PF01220">
    <property type="entry name" value="DHquinase_II"/>
    <property type="match status" value="1"/>
</dbReference>
<dbReference type="PIRSF" id="PIRSF001399">
    <property type="entry name" value="DHquinase_II"/>
    <property type="match status" value="1"/>
</dbReference>
<dbReference type="SUPFAM" id="SSF52304">
    <property type="entry name" value="Type II 3-dehydroquinate dehydratase"/>
    <property type="match status" value="1"/>
</dbReference>
<dbReference type="PROSITE" id="PS01029">
    <property type="entry name" value="DEHYDROQUINASE_II"/>
    <property type="match status" value="1"/>
</dbReference>
<protein>
    <recommendedName>
        <fullName evidence="1">3-dehydroquinate dehydratase</fullName>
        <shortName evidence="1">3-dehydroquinase</shortName>
        <ecNumber evidence="1">4.2.1.10</ecNumber>
    </recommendedName>
    <alternativeName>
        <fullName evidence="1">Type II DHQase</fullName>
    </alternativeName>
</protein>
<proteinExistence type="inferred from homology"/>
<sequence>MAENFHILLLNGPNLNLLGTREPDKYGNTTLADIVSELETQAQALNVKFSHLQSNAEHVLIDTIHQARGNTDFILINPAAFTHTSVALRDALLAVAIPFIEIHLSNVHAREPFRHHSYLSDVAVGVICGLGADGYQYALQTAVKRLSTSN</sequence>
<gene>
    <name evidence="1" type="primary">aroQ</name>
    <name type="ordered locus">ECA0262</name>
</gene>
<accession>Q6DAJ1</accession>
<name>AROQ_PECAS</name>
<reference key="1">
    <citation type="journal article" date="2004" name="Proc. Natl. Acad. Sci. U.S.A.">
        <title>Genome sequence of the enterobacterial phytopathogen Erwinia carotovora subsp. atroseptica and characterization of virulence factors.</title>
        <authorList>
            <person name="Bell K.S."/>
            <person name="Sebaihia M."/>
            <person name="Pritchard L."/>
            <person name="Holden M.T.G."/>
            <person name="Hyman L.J."/>
            <person name="Holeva M.C."/>
            <person name="Thomson N.R."/>
            <person name="Bentley S.D."/>
            <person name="Churcher L.J.C."/>
            <person name="Mungall K."/>
            <person name="Atkin R."/>
            <person name="Bason N."/>
            <person name="Brooks K."/>
            <person name="Chillingworth T."/>
            <person name="Clark K."/>
            <person name="Doggett J."/>
            <person name="Fraser A."/>
            <person name="Hance Z."/>
            <person name="Hauser H."/>
            <person name="Jagels K."/>
            <person name="Moule S."/>
            <person name="Norbertczak H."/>
            <person name="Ormond D."/>
            <person name="Price C."/>
            <person name="Quail M.A."/>
            <person name="Sanders M."/>
            <person name="Walker D."/>
            <person name="Whitehead S."/>
            <person name="Salmond G.P.C."/>
            <person name="Birch P.R.J."/>
            <person name="Parkhill J."/>
            <person name="Toth I.K."/>
        </authorList>
    </citation>
    <scope>NUCLEOTIDE SEQUENCE [LARGE SCALE GENOMIC DNA]</scope>
    <source>
        <strain>SCRI 1043 / ATCC BAA-672</strain>
    </source>
</reference>
<comment type="function">
    <text evidence="1">Catalyzes a trans-dehydration via an enolate intermediate.</text>
</comment>
<comment type="catalytic activity">
    <reaction evidence="1">
        <text>3-dehydroquinate = 3-dehydroshikimate + H2O</text>
        <dbReference type="Rhea" id="RHEA:21096"/>
        <dbReference type="ChEBI" id="CHEBI:15377"/>
        <dbReference type="ChEBI" id="CHEBI:16630"/>
        <dbReference type="ChEBI" id="CHEBI:32364"/>
        <dbReference type="EC" id="4.2.1.10"/>
    </reaction>
</comment>
<comment type="pathway">
    <text evidence="1">Metabolic intermediate biosynthesis; chorismate biosynthesis; chorismate from D-erythrose 4-phosphate and phosphoenolpyruvate: step 3/7.</text>
</comment>
<comment type="subunit">
    <text evidence="1">Homododecamer.</text>
</comment>
<comment type="similarity">
    <text evidence="1">Belongs to the type-II 3-dehydroquinase family.</text>
</comment>
<feature type="chain" id="PRO_1000023466" description="3-dehydroquinate dehydratase">
    <location>
        <begin position="1"/>
        <end position="150"/>
    </location>
</feature>
<feature type="active site" description="Proton acceptor" evidence="1">
    <location>
        <position position="26"/>
    </location>
</feature>
<feature type="active site" description="Proton donor" evidence="1">
    <location>
        <position position="103"/>
    </location>
</feature>
<feature type="binding site" evidence="1">
    <location>
        <position position="77"/>
    </location>
    <ligand>
        <name>substrate</name>
    </ligand>
</feature>
<feature type="binding site" evidence="1">
    <location>
        <position position="83"/>
    </location>
    <ligand>
        <name>substrate</name>
    </ligand>
</feature>
<feature type="binding site" evidence="1">
    <location>
        <position position="90"/>
    </location>
    <ligand>
        <name>substrate</name>
    </ligand>
</feature>
<feature type="binding site" evidence="1">
    <location>
        <begin position="104"/>
        <end position="105"/>
    </location>
    <ligand>
        <name>substrate</name>
    </ligand>
</feature>
<feature type="binding site" evidence="1">
    <location>
        <position position="114"/>
    </location>
    <ligand>
        <name>substrate</name>
    </ligand>
</feature>
<feature type="site" description="Transition state stabilizer" evidence="1">
    <location>
        <position position="21"/>
    </location>
</feature>